<reference key="1">
    <citation type="journal article" date="2006" name="Genome Res.">
        <title>Skewed genomic variability in strains of the toxigenic bacterial pathogen, Clostridium perfringens.</title>
        <authorList>
            <person name="Myers G.S.A."/>
            <person name="Rasko D.A."/>
            <person name="Cheung J.K."/>
            <person name="Ravel J."/>
            <person name="Seshadri R."/>
            <person name="DeBoy R.T."/>
            <person name="Ren Q."/>
            <person name="Varga J."/>
            <person name="Awad M.M."/>
            <person name="Brinkac L.M."/>
            <person name="Daugherty S.C."/>
            <person name="Haft D.H."/>
            <person name="Dodson R.J."/>
            <person name="Madupu R."/>
            <person name="Nelson W.C."/>
            <person name="Rosovitz M.J."/>
            <person name="Sullivan S.A."/>
            <person name="Khouri H."/>
            <person name="Dimitrov G.I."/>
            <person name="Watkins K.L."/>
            <person name="Mulligan S."/>
            <person name="Benton J."/>
            <person name="Radune D."/>
            <person name="Fisher D.J."/>
            <person name="Atkins H.S."/>
            <person name="Hiscox T."/>
            <person name="Jost B.H."/>
            <person name="Billington S.J."/>
            <person name="Songer J.G."/>
            <person name="McClane B.A."/>
            <person name="Titball R.W."/>
            <person name="Rood J.I."/>
            <person name="Melville S.B."/>
            <person name="Paulsen I.T."/>
        </authorList>
    </citation>
    <scope>NUCLEOTIDE SEQUENCE [LARGE SCALE GENOMIC DNA]</scope>
    <source>
        <strain>ATCC 13124 / DSM 756 / JCM 1290 / NCIMB 6125 / NCTC 8237 / S 107 / Type A</strain>
    </source>
</reference>
<organism>
    <name type="scientific">Clostridium perfringens (strain ATCC 13124 / DSM 756 / JCM 1290 / NCIMB 6125 / NCTC 8237 / Type A)</name>
    <dbReference type="NCBI Taxonomy" id="195103"/>
    <lineage>
        <taxon>Bacteria</taxon>
        <taxon>Bacillati</taxon>
        <taxon>Bacillota</taxon>
        <taxon>Clostridia</taxon>
        <taxon>Eubacteriales</taxon>
        <taxon>Clostridiaceae</taxon>
        <taxon>Clostridium</taxon>
    </lineage>
</organism>
<proteinExistence type="inferred from homology"/>
<dbReference type="EC" id="4.6.1.12" evidence="1"/>
<dbReference type="EMBL" id="CP000246">
    <property type="protein sequence ID" value="ABG83371.1"/>
    <property type="molecule type" value="Genomic_DNA"/>
</dbReference>
<dbReference type="RefSeq" id="WP_003457926.1">
    <property type="nucleotide sequence ID" value="NC_008261.1"/>
</dbReference>
<dbReference type="SMR" id="Q0TMY4"/>
<dbReference type="STRING" id="195103.CPF_2616"/>
<dbReference type="PaxDb" id="195103-CPF_2616"/>
<dbReference type="GeneID" id="93001106"/>
<dbReference type="KEGG" id="cpf:CPF_2616"/>
<dbReference type="eggNOG" id="COG0245">
    <property type="taxonomic scope" value="Bacteria"/>
</dbReference>
<dbReference type="HOGENOM" id="CLU_084630_2_0_9"/>
<dbReference type="UniPathway" id="UPA00056">
    <property type="reaction ID" value="UER00095"/>
</dbReference>
<dbReference type="Proteomes" id="UP000001823">
    <property type="component" value="Chromosome"/>
</dbReference>
<dbReference type="GO" id="GO:0008685">
    <property type="term" value="F:2-C-methyl-D-erythritol 2,4-cyclodiphosphate synthase activity"/>
    <property type="evidence" value="ECO:0007669"/>
    <property type="project" value="UniProtKB-UniRule"/>
</dbReference>
<dbReference type="GO" id="GO:0046872">
    <property type="term" value="F:metal ion binding"/>
    <property type="evidence" value="ECO:0007669"/>
    <property type="project" value="UniProtKB-KW"/>
</dbReference>
<dbReference type="GO" id="GO:0019288">
    <property type="term" value="P:isopentenyl diphosphate biosynthetic process, methylerythritol 4-phosphate pathway"/>
    <property type="evidence" value="ECO:0007669"/>
    <property type="project" value="UniProtKB-UniRule"/>
</dbReference>
<dbReference type="GO" id="GO:0016114">
    <property type="term" value="P:terpenoid biosynthetic process"/>
    <property type="evidence" value="ECO:0007669"/>
    <property type="project" value="InterPro"/>
</dbReference>
<dbReference type="CDD" id="cd00554">
    <property type="entry name" value="MECDP_synthase"/>
    <property type="match status" value="1"/>
</dbReference>
<dbReference type="FunFam" id="3.30.1330.50:FF:000001">
    <property type="entry name" value="2-C-methyl-D-erythritol 2,4-cyclodiphosphate synthase"/>
    <property type="match status" value="1"/>
</dbReference>
<dbReference type="Gene3D" id="3.30.1330.50">
    <property type="entry name" value="2-C-methyl-D-erythritol 2,4-cyclodiphosphate synthase"/>
    <property type="match status" value="1"/>
</dbReference>
<dbReference type="HAMAP" id="MF_00107">
    <property type="entry name" value="IspF"/>
    <property type="match status" value="1"/>
</dbReference>
<dbReference type="InterPro" id="IPR003526">
    <property type="entry name" value="MECDP_synthase"/>
</dbReference>
<dbReference type="InterPro" id="IPR020555">
    <property type="entry name" value="MECDP_synthase_CS"/>
</dbReference>
<dbReference type="InterPro" id="IPR036571">
    <property type="entry name" value="MECDP_synthase_sf"/>
</dbReference>
<dbReference type="NCBIfam" id="TIGR00151">
    <property type="entry name" value="ispF"/>
    <property type="match status" value="1"/>
</dbReference>
<dbReference type="PANTHER" id="PTHR43181">
    <property type="entry name" value="2-C-METHYL-D-ERYTHRITOL 2,4-CYCLODIPHOSPHATE SYNTHASE, CHLOROPLASTIC"/>
    <property type="match status" value="1"/>
</dbReference>
<dbReference type="PANTHER" id="PTHR43181:SF1">
    <property type="entry name" value="2-C-METHYL-D-ERYTHRITOL 2,4-CYCLODIPHOSPHATE SYNTHASE, CHLOROPLASTIC"/>
    <property type="match status" value="1"/>
</dbReference>
<dbReference type="Pfam" id="PF02542">
    <property type="entry name" value="YgbB"/>
    <property type="match status" value="1"/>
</dbReference>
<dbReference type="SUPFAM" id="SSF69765">
    <property type="entry name" value="IpsF-like"/>
    <property type="match status" value="1"/>
</dbReference>
<dbReference type="PROSITE" id="PS01350">
    <property type="entry name" value="ISPF"/>
    <property type="match status" value="1"/>
</dbReference>
<comment type="function">
    <text evidence="1">Involved in the biosynthesis of isopentenyl diphosphate (IPP) and dimethylallyl diphosphate (DMAPP), two major building blocks of isoprenoid compounds. Catalyzes the conversion of 4-diphosphocytidyl-2-C-methyl-D-erythritol 2-phosphate (CDP-ME2P) to 2-C-methyl-D-erythritol 2,4-cyclodiphosphate (ME-CPP) with a corresponding release of cytidine 5-monophosphate (CMP).</text>
</comment>
<comment type="catalytic activity">
    <reaction evidence="1">
        <text>4-CDP-2-C-methyl-D-erythritol 2-phosphate = 2-C-methyl-D-erythritol 2,4-cyclic diphosphate + CMP</text>
        <dbReference type="Rhea" id="RHEA:23864"/>
        <dbReference type="ChEBI" id="CHEBI:57919"/>
        <dbReference type="ChEBI" id="CHEBI:58483"/>
        <dbReference type="ChEBI" id="CHEBI:60377"/>
        <dbReference type="EC" id="4.6.1.12"/>
    </reaction>
</comment>
<comment type="cofactor">
    <cofactor evidence="1">
        <name>a divalent metal cation</name>
        <dbReference type="ChEBI" id="CHEBI:60240"/>
    </cofactor>
    <text evidence="1">Binds 1 divalent metal cation per subunit.</text>
</comment>
<comment type="pathway">
    <text evidence="1">Isoprenoid biosynthesis; isopentenyl diphosphate biosynthesis via DXP pathway; isopentenyl diphosphate from 1-deoxy-D-xylulose 5-phosphate: step 4/6.</text>
</comment>
<comment type="subunit">
    <text evidence="1">Homotrimer.</text>
</comment>
<comment type="similarity">
    <text evidence="1">Belongs to the IspF family.</text>
</comment>
<sequence length="156" mass="16866">MRIGMGYDVHKLVENRDLILGGVKIPYEKGLLGHSDADVLLHAIMDSLLGAAALGDIGKHFPDTDPKYKGADSIKLLEFVGELLNKNNYKISNIDATIIAQRPKMAPHIPTMRENIAKALNIDLDQINVKATTEEGLGFTGSGEGISSQSICLLVK</sequence>
<gene>
    <name evidence="1" type="primary">ispF</name>
    <name type="ordered locus">CPF_2616</name>
</gene>
<name>ISPF_CLOP1</name>
<evidence type="ECO:0000255" key="1">
    <source>
        <dbReference type="HAMAP-Rule" id="MF_00107"/>
    </source>
</evidence>
<protein>
    <recommendedName>
        <fullName evidence="1">2-C-methyl-D-erythritol 2,4-cyclodiphosphate synthase</fullName>
        <shortName evidence="1">MECDP-synthase</shortName>
        <shortName evidence="1">MECPP-synthase</shortName>
        <shortName evidence="1">MECPS</shortName>
        <ecNumber evidence="1">4.6.1.12</ecNumber>
    </recommendedName>
</protein>
<keyword id="KW-0414">Isoprene biosynthesis</keyword>
<keyword id="KW-0456">Lyase</keyword>
<keyword id="KW-0479">Metal-binding</keyword>
<accession>Q0TMY4</accession>
<feature type="chain" id="PRO_1000022828" description="2-C-methyl-D-erythritol 2,4-cyclodiphosphate synthase">
    <location>
        <begin position="1"/>
        <end position="156"/>
    </location>
</feature>
<feature type="binding site" evidence="1">
    <location>
        <begin position="8"/>
        <end position="10"/>
    </location>
    <ligand>
        <name>4-CDP-2-C-methyl-D-erythritol 2-phosphate</name>
        <dbReference type="ChEBI" id="CHEBI:57919"/>
    </ligand>
</feature>
<feature type="binding site" evidence="1">
    <location>
        <position position="8"/>
    </location>
    <ligand>
        <name>a divalent metal cation</name>
        <dbReference type="ChEBI" id="CHEBI:60240"/>
    </ligand>
</feature>
<feature type="binding site" evidence="1">
    <location>
        <position position="10"/>
    </location>
    <ligand>
        <name>a divalent metal cation</name>
        <dbReference type="ChEBI" id="CHEBI:60240"/>
    </ligand>
</feature>
<feature type="binding site" evidence="1">
    <location>
        <begin position="34"/>
        <end position="35"/>
    </location>
    <ligand>
        <name>4-CDP-2-C-methyl-D-erythritol 2-phosphate</name>
        <dbReference type="ChEBI" id="CHEBI:57919"/>
    </ligand>
</feature>
<feature type="binding site" evidence="1">
    <location>
        <position position="42"/>
    </location>
    <ligand>
        <name>a divalent metal cation</name>
        <dbReference type="ChEBI" id="CHEBI:60240"/>
    </ligand>
</feature>
<feature type="binding site" evidence="1">
    <location>
        <begin position="56"/>
        <end position="58"/>
    </location>
    <ligand>
        <name>4-CDP-2-C-methyl-D-erythritol 2-phosphate</name>
        <dbReference type="ChEBI" id="CHEBI:57919"/>
    </ligand>
</feature>
<feature type="binding site" evidence="1">
    <location>
        <begin position="61"/>
        <end position="65"/>
    </location>
    <ligand>
        <name>4-CDP-2-C-methyl-D-erythritol 2-phosphate</name>
        <dbReference type="ChEBI" id="CHEBI:57919"/>
    </ligand>
</feature>
<feature type="binding site" evidence="1">
    <location>
        <begin position="100"/>
        <end position="106"/>
    </location>
    <ligand>
        <name>4-CDP-2-C-methyl-D-erythritol 2-phosphate</name>
        <dbReference type="ChEBI" id="CHEBI:57919"/>
    </ligand>
</feature>
<feature type="binding site" evidence="1">
    <location>
        <begin position="132"/>
        <end position="135"/>
    </location>
    <ligand>
        <name>4-CDP-2-C-methyl-D-erythritol 2-phosphate</name>
        <dbReference type="ChEBI" id="CHEBI:57919"/>
    </ligand>
</feature>
<feature type="binding site" evidence="1">
    <location>
        <position position="139"/>
    </location>
    <ligand>
        <name>4-CDP-2-C-methyl-D-erythritol 2-phosphate</name>
        <dbReference type="ChEBI" id="CHEBI:57919"/>
    </ligand>
</feature>
<feature type="site" description="Transition state stabilizer" evidence="1">
    <location>
        <position position="34"/>
    </location>
</feature>
<feature type="site" description="Transition state stabilizer" evidence="1">
    <location>
        <position position="133"/>
    </location>
</feature>